<proteinExistence type="inferred from homology"/>
<comment type="function">
    <text evidence="1">Essential cell division protein that forms a contractile ring structure (Z ring) at the future cell division site. The regulation of the ring assembly controls the timing and the location of cell division. One of the functions of the FtsZ ring is to recruit other cell division proteins to the septum to produce a new cell wall between the dividing cells. Binds GTP and shows GTPase activity.</text>
</comment>
<comment type="subunit">
    <text evidence="1">Homodimer. Polymerizes to form a dynamic ring structure in a strictly GTP-dependent manner. Interacts directly with several other division proteins.</text>
</comment>
<comment type="subcellular location">
    <subcellularLocation>
        <location evidence="1">Cytoplasm</location>
    </subcellularLocation>
    <text evidence="1">Assembles at midcell at the inner surface of the cytoplasmic membrane.</text>
</comment>
<comment type="similarity">
    <text evidence="1">Belongs to the FtsZ family.</text>
</comment>
<name>FTSZ2_PYRAB</name>
<accession>Q9UZ61</accession>
<accession>G8ZH96</accession>
<evidence type="ECO:0000255" key="1">
    <source>
        <dbReference type="HAMAP-Rule" id="MF_00909"/>
    </source>
</evidence>
<organism>
    <name type="scientific">Pyrococcus abyssi (strain GE5 / Orsay)</name>
    <dbReference type="NCBI Taxonomy" id="272844"/>
    <lineage>
        <taxon>Archaea</taxon>
        <taxon>Methanobacteriati</taxon>
        <taxon>Methanobacteriota</taxon>
        <taxon>Thermococci</taxon>
        <taxon>Thermococcales</taxon>
        <taxon>Thermococcaceae</taxon>
        <taxon>Pyrococcus</taxon>
    </lineage>
</organism>
<dbReference type="EMBL" id="AJ248287">
    <property type="protein sequence ID" value="CAB50198.1"/>
    <property type="molecule type" value="Genomic_DNA"/>
</dbReference>
<dbReference type="EMBL" id="HE613800">
    <property type="protein sequence ID" value="CCE70733.1"/>
    <property type="molecule type" value="Genomic_DNA"/>
</dbReference>
<dbReference type="PIR" id="A75038">
    <property type="entry name" value="A75038"/>
</dbReference>
<dbReference type="RefSeq" id="WP_010868407.1">
    <property type="nucleotide sequence ID" value="NC_000868.1"/>
</dbReference>
<dbReference type="SMR" id="Q9UZ61"/>
<dbReference type="STRING" id="272844.PAB0851"/>
<dbReference type="KEGG" id="pab:PAB0851"/>
<dbReference type="PATRIC" id="fig|272844.11.peg.1376"/>
<dbReference type="eggNOG" id="arCOG02201">
    <property type="taxonomic scope" value="Archaea"/>
</dbReference>
<dbReference type="HOGENOM" id="CLU_024865_0_1_2"/>
<dbReference type="OrthoDB" id="371908at2157"/>
<dbReference type="PhylomeDB" id="Q9UZ61"/>
<dbReference type="Proteomes" id="UP000000810">
    <property type="component" value="Chromosome"/>
</dbReference>
<dbReference type="Proteomes" id="UP000009139">
    <property type="component" value="Chromosome"/>
</dbReference>
<dbReference type="GO" id="GO:0032153">
    <property type="term" value="C:cell division site"/>
    <property type="evidence" value="ECO:0007669"/>
    <property type="project" value="UniProtKB-UniRule"/>
</dbReference>
<dbReference type="GO" id="GO:0005737">
    <property type="term" value="C:cytoplasm"/>
    <property type="evidence" value="ECO:0007669"/>
    <property type="project" value="UniProtKB-SubCell"/>
</dbReference>
<dbReference type="GO" id="GO:0005525">
    <property type="term" value="F:GTP binding"/>
    <property type="evidence" value="ECO:0007669"/>
    <property type="project" value="UniProtKB-UniRule"/>
</dbReference>
<dbReference type="GO" id="GO:0003924">
    <property type="term" value="F:GTPase activity"/>
    <property type="evidence" value="ECO:0007669"/>
    <property type="project" value="UniProtKB-UniRule"/>
</dbReference>
<dbReference type="GO" id="GO:0043093">
    <property type="term" value="P:FtsZ-dependent cytokinesis"/>
    <property type="evidence" value="ECO:0007669"/>
    <property type="project" value="UniProtKB-UniRule"/>
</dbReference>
<dbReference type="GO" id="GO:0051258">
    <property type="term" value="P:protein polymerization"/>
    <property type="evidence" value="ECO:0007669"/>
    <property type="project" value="UniProtKB-UniRule"/>
</dbReference>
<dbReference type="CDD" id="cd02201">
    <property type="entry name" value="FtsZ_type1"/>
    <property type="match status" value="1"/>
</dbReference>
<dbReference type="FunFam" id="3.40.50.1440:FF:000023">
    <property type="entry name" value="Cell division protein FtsZ"/>
    <property type="match status" value="1"/>
</dbReference>
<dbReference type="Gene3D" id="3.40.50.1440">
    <property type="entry name" value="Tubulin/FtsZ, GTPase domain"/>
    <property type="match status" value="1"/>
</dbReference>
<dbReference type="HAMAP" id="MF_00909">
    <property type="entry name" value="FtsZ"/>
    <property type="match status" value="1"/>
</dbReference>
<dbReference type="InterPro" id="IPR000158">
    <property type="entry name" value="Cell_div_FtsZ"/>
</dbReference>
<dbReference type="InterPro" id="IPR020805">
    <property type="entry name" value="Cell_div_FtsZ_CS"/>
</dbReference>
<dbReference type="InterPro" id="IPR045061">
    <property type="entry name" value="FtsZ/CetZ"/>
</dbReference>
<dbReference type="InterPro" id="IPR024757">
    <property type="entry name" value="FtsZ_C"/>
</dbReference>
<dbReference type="InterPro" id="IPR008280">
    <property type="entry name" value="Tub_FtsZ_C"/>
</dbReference>
<dbReference type="InterPro" id="IPR018316">
    <property type="entry name" value="Tubulin/FtsZ_2-layer-sand-dom"/>
</dbReference>
<dbReference type="InterPro" id="IPR036525">
    <property type="entry name" value="Tubulin/FtsZ_GTPase_sf"/>
</dbReference>
<dbReference type="InterPro" id="IPR003008">
    <property type="entry name" value="Tubulin_FtsZ_GTPase"/>
</dbReference>
<dbReference type="NCBIfam" id="TIGR00065">
    <property type="entry name" value="ftsZ"/>
    <property type="match status" value="1"/>
</dbReference>
<dbReference type="PANTHER" id="PTHR30314:SF9">
    <property type="entry name" value="CELL DIVISION PROTEIN FTSZ 2"/>
    <property type="match status" value="1"/>
</dbReference>
<dbReference type="PANTHER" id="PTHR30314">
    <property type="entry name" value="CELL DIVISION PROTEIN FTSZ-RELATED"/>
    <property type="match status" value="1"/>
</dbReference>
<dbReference type="Pfam" id="PF12327">
    <property type="entry name" value="FtsZ_C"/>
    <property type="match status" value="1"/>
</dbReference>
<dbReference type="Pfam" id="PF00091">
    <property type="entry name" value="Tubulin"/>
    <property type="match status" value="1"/>
</dbReference>
<dbReference type="PRINTS" id="PR00423">
    <property type="entry name" value="CELLDVISFTSZ"/>
</dbReference>
<dbReference type="SMART" id="SM00864">
    <property type="entry name" value="Tubulin"/>
    <property type="match status" value="1"/>
</dbReference>
<dbReference type="SMART" id="SM00865">
    <property type="entry name" value="Tubulin_C"/>
    <property type="match status" value="1"/>
</dbReference>
<dbReference type="SUPFAM" id="SSF55307">
    <property type="entry name" value="Tubulin C-terminal domain-like"/>
    <property type="match status" value="1"/>
</dbReference>
<dbReference type="SUPFAM" id="SSF52490">
    <property type="entry name" value="Tubulin nucleotide-binding domain-like"/>
    <property type="match status" value="1"/>
</dbReference>
<dbReference type="PROSITE" id="PS01134">
    <property type="entry name" value="FTSZ_1"/>
    <property type="match status" value="1"/>
</dbReference>
<dbReference type="PROSITE" id="PS01135">
    <property type="entry name" value="FTSZ_2"/>
    <property type="match status" value="1"/>
</dbReference>
<sequence length="413" mass="44996">MVFDKLLEQAGINLDLDGKDMMDSEMLGDVSDLIKIAVIGVGGSGNNTITRLYDLGVQGADLIAMNTDAQHLHYVKAHKKLLLGRSITHGKGSGGDPRVGYRAAEASASEIAEVVKGYDLIFLTAGMGNGTGTGATPVIARIIKETARNNGLPQEPLVISVVTFPFKMEGRVRIEKAKAGIEMLLEYSDTVIIIQNDKLKELVPKLPIQIAFRFADEIIARMVKGIVETIKLPSMVNIDYADIYSVMKGGGPALIGIGESDSNNRAVDAVMEALNNKMLDVEFGSGDKALVHFTVGPDVSLEEITKAMEIVYERLGEKSEIKWGAMIEEDMGKTVRAMVIMTGVKSPQILGNIEPNALTYSSSSIVVPRSKRLTESKVDEIFDSIDPRTSKLKKMKDNSRVNKIFRDLGFYEL</sequence>
<protein>
    <recommendedName>
        <fullName evidence="1">Cell division protein FtsZ 2</fullName>
    </recommendedName>
</protein>
<gene>
    <name evidence="1" type="primary">ftsZ2</name>
    <name type="synonym">ftsZ-2</name>
    <name type="ordered locus">PYRAB12930</name>
    <name type="ORF">PAB0851</name>
</gene>
<reference key="1">
    <citation type="journal article" date="2003" name="Mol. Microbiol.">
        <title>An integrated analysis of the genome of the hyperthermophilic archaeon Pyrococcus abyssi.</title>
        <authorList>
            <person name="Cohen G.N."/>
            <person name="Barbe V."/>
            <person name="Flament D."/>
            <person name="Galperin M."/>
            <person name="Heilig R."/>
            <person name="Lecompte O."/>
            <person name="Poch O."/>
            <person name="Prieur D."/>
            <person name="Querellou J."/>
            <person name="Ripp R."/>
            <person name="Thierry J.-C."/>
            <person name="Van der Oost J."/>
            <person name="Weissenbach J."/>
            <person name="Zivanovic Y."/>
            <person name="Forterre P."/>
        </authorList>
    </citation>
    <scope>NUCLEOTIDE SEQUENCE [LARGE SCALE GENOMIC DNA]</scope>
    <source>
        <strain>GE5 / Orsay</strain>
    </source>
</reference>
<reference key="2">
    <citation type="journal article" date="2012" name="Curr. Microbiol.">
        <title>Re-annotation of two hyperthermophilic archaea Pyrococcus abyssi GE5 and Pyrococcus furiosus DSM 3638.</title>
        <authorList>
            <person name="Gao J."/>
            <person name="Wang J."/>
        </authorList>
    </citation>
    <scope>GENOME REANNOTATION</scope>
    <source>
        <strain>GE5 / Orsay</strain>
    </source>
</reference>
<feature type="chain" id="PRO_0000114409" description="Cell division protein FtsZ 2">
    <location>
        <begin position="1"/>
        <end position="413"/>
    </location>
</feature>
<feature type="binding site" evidence="1">
    <location>
        <begin position="130"/>
        <end position="132"/>
    </location>
    <ligand>
        <name>GTP</name>
        <dbReference type="ChEBI" id="CHEBI:37565"/>
    </ligand>
</feature>
<feature type="binding site" evidence="1">
    <location>
        <position position="169"/>
    </location>
    <ligand>
        <name>GTP</name>
        <dbReference type="ChEBI" id="CHEBI:37565"/>
    </ligand>
</feature>
<feature type="binding site" evidence="1">
    <location>
        <position position="173"/>
    </location>
    <ligand>
        <name>GTP</name>
        <dbReference type="ChEBI" id="CHEBI:37565"/>
    </ligand>
</feature>
<feature type="binding site" evidence="1">
    <location>
        <position position="216"/>
    </location>
    <ligand>
        <name>GTP</name>
        <dbReference type="ChEBI" id="CHEBI:37565"/>
    </ligand>
</feature>
<keyword id="KW-0131">Cell cycle</keyword>
<keyword id="KW-0132">Cell division</keyword>
<keyword id="KW-0963">Cytoplasm</keyword>
<keyword id="KW-0342">GTP-binding</keyword>
<keyword id="KW-0547">Nucleotide-binding</keyword>
<keyword id="KW-0717">Septation</keyword>